<protein>
    <recommendedName>
        <fullName evidence="1">Photosystem II reaction center protein L</fullName>
        <shortName evidence="1">PSII-L</shortName>
    </recommendedName>
</protein>
<geneLocation type="chloroplast"/>
<comment type="function">
    <text evidence="1">One of the components of the core complex of photosystem II (PSII). PSII is a light-driven water:plastoquinone oxidoreductase that uses light energy to abstract electrons from H(2)O, generating O(2) and a proton gradient subsequently used for ATP formation. It consists of a core antenna complex that captures photons, and an electron transfer chain that converts photonic excitation into a charge separation. This subunit is found at the monomer-monomer interface and is required for correct PSII assembly and/or dimerization.</text>
</comment>
<comment type="subunit">
    <text evidence="1">PSII is composed of 1 copy each of membrane proteins PsbA, PsbB, PsbC, PsbD, PsbE, PsbF, PsbH, PsbI, PsbJ, PsbK, PsbL, PsbM, PsbT, PsbX, PsbY, PsbZ, Psb30/Ycf12, at least 3 peripheral proteins of the oxygen-evolving complex and a large number of cofactors. It forms dimeric complexes.</text>
</comment>
<comment type="subcellular location">
    <subcellularLocation>
        <location evidence="1">Plastid</location>
        <location evidence="1">Chloroplast thylakoid membrane</location>
        <topology evidence="1">Single-pass membrane protein</topology>
    </subcellularLocation>
</comment>
<comment type="similarity">
    <text evidence="1">Belongs to the PsbL family.</text>
</comment>
<feature type="chain" id="PRO_0000219694" description="Photosystem II reaction center protein L">
    <location>
        <begin position="1"/>
        <end position="38"/>
    </location>
</feature>
<feature type="transmembrane region" description="Helical" evidence="1">
    <location>
        <begin position="17"/>
        <end position="37"/>
    </location>
</feature>
<dbReference type="EMBL" id="AF123833">
    <property type="protein sequence ID" value="AAG26212.1"/>
    <property type="molecule type" value="Genomic_DNA"/>
</dbReference>
<dbReference type="RefSeq" id="YP_009493287.1">
    <property type="nucleotide sequence ID" value="NC_037940.1"/>
</dbReference>
<dbReference type="SMR" id="Q7J1B6"/>
<dbReference type="GeneID" id="36953554"/>
<dbReference type="GO" id="GO:0009535">
    <property type="term" value="C:chloroplast thylakoid membrane"/>
    <property type="evidence" value="ECO:0007669"/>
    <property type="project" value="UniProtKB-SubCell"/>
</dbReference>
<dbReference type="GO" id="GO:0009539">
    <property type="term" value="C:photosystem II reaction center"/>
    <property type="evidence" value="ECO:0007669"/>
    <property type="project" value="InterPro"/>
</dbReference>
<dbReference type="GO" id="GO:0015979">
    <property type="term" value="P:photosynthesis"/>
    <property type="evidence" value="ECO:0007669"/>
    <property type="project" value="UniProtKB-UniRule"/>
</dbReference>
<dbReference type="HAMAP" id="MF_01317">
    <property type="entry name" value="PSII_PsbL"/>
    <property type="match status" value="1"/>
</dbReference>
<dbReference type="InterPro" id="IPR003372">
    <property type="entry name" value="PSII_PsbL"/>
</dbReference>
<dbReference type="InterPro" id="IPR037266">
    <property type="entry name" value="PSII_PsbL_sf"/>
</dbReference>
<dbReference type="NCBIfam" id="NF001972">
    <property type="entry name" value="PRK00753.1"/>
    <property type="match status" value="1"/>
</dbReference>
<dbReference type="Pfam" id="PF02419">
    <property type="entry name" value="PsbL"/>
    <property type="match status" value="1"/>
</dbReference>
<dbReference type="SUPFAM" id="SSF161017">
    <property type="entry name" value="Photosystem II reaction center protein L, PsbL"/>
    <property type="match status" value="1"/>
</dbReference>
<organism>
    <name type="scientific">Cercidiphyllum japonicum</name>
    <name type="common">Katsura tree</name>
    <dbReference type="NCBI Taxonomy" id="13413"/>
    <lineage>
        <taxon>Eukaryota</taxon>
        <taxon>Viridiplantae</taxon>
        <taxon>Streptophyta</taxon>
        <taxon>Embryophyta</taxon>
        <taxon>Tracheophyta</taxon>
        <taxon>Spermatophyta</taxon>
        <taxon>Magnoliopsida</taxon>
        <taxon>eudicotyledons</taxon>
        <taxon>Gunneridae</taxon>
        <taxon>Pentapetalae</taxon>
        <taxon>Saxifragales</taxon>
        <taxon>Cercidiphyllaceae</taxon>
        <taxon>Cercidiphyllum</taxon>
    </lineage>
</organism>
<keyword id="KW-0150">Chloroplast</keyword>
<keyword id="KW-0472">Membrane</keyword>
<keyword id="KW-0602">Photosynthesis</keyword>
<keyword id="KW-0604">Photosystem II</keyword>
<keyword id="KW-0934">Plastid</keyword>
<keyword id="KW-0674">Reaction center</keyword>
<keyword id="KW-0793">Thylakoid</keyword>
<keyword id="KW-0812">Transmembrane</keyword>
<keyword id="KW-1133">Transmembrane helix</keyword>
<reference key="1">
    <citation type="journal article" date="2000" name="Am. J. Bot.">
        <title>Utility of 17 chloroplast genes for inferring the phylogeny of the basal angiosperms.</title>
        <authorList>
            <person name="Graham S.W."/>
            <person name="Olmstead R.G."/>
        </authorList>
    </citation>
    <scope>NUCLEOTIDE SEQUENCE [GENOMIC DNA]</scope>
</reference>
<proteinExistence type="inferred from homology"/>
<gene>
    <name evidence="1" type="primary">psbL</name>
</gene>
<evidence type="ECO:0000255" key="1">
    <source>
        <dbReference type="HAMAP-Rule" id="MF_01317"/>
    </source>
</evidence>
<name>PSBL_CERJA</name>
<accession>Q7J1B6</accession>
<sequence length="38" mass="4497">MTQSNPNEQNVELNRTSLYWGLLLIFVLAVLFSNYFFN</sequence>